<name>Y1475_LISMF</name>
<organism>
    <name type="scientific">Listeria monocytogenes serotype 4b (strain F2365)</name>
    <dbReference type="NCBI Taxonomy" id="265669"/>
    <lineage>
        <taxon>Bacteria</taxon>
        <taxon>Bacillati</taxon>
        <taxon>Bacillota</taxon>
        <taxon>Bacilli</taxon>
        <taxon>Bacillales</taxon>
        <taxon>Listeriaceae</taxon>
        <taxon>Listeria</taxon>
    </lineage>
</organism>
<accession>Q71ZL4</accession>
<evidence type="ECO:0000255" key="1">
    <source>
        <dbReference type="HAMAP-Rule" id="MF_00489"/>
    </source>
</evidence>
<proteinExistence type="inferred from homology"/>
<protein>
    <recommendedName>
        <fullName evidence="1">UPF0178 protein LMOf2365_1475</fullName>
    </recommendedName>
</protein>
<reference key="1">
    <citation type="journal article" date="2004" name="Nucleic Acids Res.">
        <title>Whole genome comparisons of serotype 4b and 1/2a strains of the food-borne pathogen Listeria monocytogenes reveal new insights into the core genome components of this species.</title>
        <authorList>
            <person name="Nelson K.E."/>
            <person name="Fouts D.E."/>
            <person name="Mongodin E.F."/>
            <person name="Ravel J."/>
            <person name="DeBoy R.T."/>
            <person name="Kolonay J.F."/>
            <person name="Rasko D.A."/>
            <person name="Angiuoli S.V."/>
            <person name="Gill S.R."/>
            <person name="Paulsen I.T."/>
            <person name="Peterson J.D."/>
            <person name="White O."/>
            <person name="Nelson W.C."/>
            <person name="Nierman W.C."/>
            <person name="Beanan M.J."/>
            <person name="Brinkac L.M."/>
            <person name="Daugherty S.C."/>
            <person name="Dodson R.J."/>
            <person name="Durkin A.S."/>
            <person name="Madupu R."/>
            <person name="Haft D.H."/>
            <person name="Selengut J."/>
            <person name="Van Aken S.E."/>
            <person name="Khouri H.M."/>
            <person name="Fedorova N."/>
            <person name="Forberger H.A."/>
            <person name="Tran B."/>
            <person name="Kathariou S."/>
            <person name="Wonderling L.D."/>
            <person name="Uhlich G.A."/>
            <person name="Bayles D.O."/>
            <person name="Luchansky J.B."/>
            <person name="Fraser C.M."/>
        </authorList>
    </citation>
    <scope>NUCLEOTIDE SEQUENCE [LARGE SCALE GENOMIC DNA]</scope>
    <source>
        <strain>F2365</strain>
    </source>
</reference>
<dbReference type="EMBL" id="AE017262">
    <property type="protein sequence ID" value="AAT04250.1"/>
    <property type="molecule type" value="Genomic_DNA"/>
</dbReference>
<dbReference type="RefSeq" id="WP_003740997.1">
    <property type="nucleotide sequence ID" value="NC_002973.6"/>
</dbReference>
<dbReference type="KEGG" id="lmf:LMOf2365_1475"/>
<dbReference type="HOGENOM" id="CLU_106619_0_0_9"/>
<dbReference type="CDD" id="cd18720">
    <property type="entry name" value="PIN_YqxD-like"/>
    <property type="match status" value="1"/>
</dbReference>
<dbReference type="HAMAP" id="MF_00489">
    <property type="entry name" value="UPF0178"/>
    <property type="match status" value="1"/>
</dbReference>
<dbReference type="InterPro" id="IPR003791">
    <property type="entry name" value="UPF0178"/>
</dbReference>
<dbReference type="NCBIfam" id="NF001095">
    <property type="entry name" value="PRK00124.1"/>
    <property type="match status" value="1"/>
</dbReference>
<dbReference type="PANTHER" id="PTHR35146">
    <property type="entry name" value="UPF0178 PROTEIN YAII"/>
    <property type="match status" value="1"/>
</dbReference>
<dbReference type="PANTHER" id="PTHR35146:SF1">
    <property type="entry name" value="UPF0178 PROTEIN YAII"/>
    <property type="match status" value="1"/>
</dbReference>
<dbReference type="Pfam" id="PF02639">
    <property type="entry name" value="DUF188"/>
    <property type="match status" value="1"/>
</dbReference>
<sequence length="146" mass="16681">MPKILVDADACPVKAEIKQVAEHFQLDVIFVASFNHYSVNTNGENWIFVDTGKESADMRMMNLAKKGDIIVTQDIGLASILLAKGTFVFSNRGELYREEEMSLMLDIRYRHAKDRQQGKYSKGPKAMSDQDRSLFKDRLTTFLQNK</sequence>
<feature type="chain" id="PRO_0000175990" description="UPF0178 protein LMOf2365_1475">
    <location>
        <begin position="1"/>
        <end position="146"/>
    </location>
</feature>
<gene>
    <name type="ordered locus">LMOf2365_1475</name>
</gene>
<comment type="similarity">
    <text evidence="1">Belongs to the UPF0178 family.</text>
</comment>